<name>IBP2_RAT</name>
<dbReference type="EMBL" id="J04486">
    <property type="protein sequence ID" value="AAA40829.1"/>
    <property type="molecule type" value="mRNA"/>
</dbReference>
<dbReference type="EMBL" id="M31672">
    <property type="protein sequence ID" value="AAA41381.1"/>
    <property type="molecule type" value="mRNA"/>
</dbReference>
<dbReference type="EMBL" id="BC092570">
    <property type="protein sequence ID" value="AAH92570.1"/>
    <property type="molecule type" value="mRNA"/>
</dbReference>
<dbReference type="PIR" id="A33274">
    <property type="entry name" value="A33274"/>
</dbReference>
<dbReference type="RefSeq" id="NP_037254.2">
    <property type="nucleotide sequence ID" value="NM_013122.2"/>
</dbReference>
<dbReference type="SMR" id="P12843"/>
<dbReference type="FunCoup" id="P12843">
    <property type="interactions" value="393"/>
</dbReference>
<dbReference type="STRING" id="10116.ENSRNOP00000023068"/>
<dbReference type="MEROPS" id="I31.953"/>
<dbReference type="iPTMnet" id="P12843"/>
<dbReference type="PhosphoSitePlus" id="P12843"/>
<dbReference type="PaxDb" id="10116-ENSRNOP00000023068"/>
<dbReference type="Ensembl" id="ENSRNOT00000023068.4">
    <property type="protein sequence ID" value="ENSRNOP00000023068.1"/>
    <property type="gene ID" value="ENSRNOG00000016957.6"/>
</dbReference>
<dbReference type="GeneID" id="25662"/>
<dbReference type="KEGG" id="rno:25662"/>
<dbReference type="AGR" id="RGD:2873"/>
<dbReference type="CTD" id="3485"/>
<dbReference type="RGD" id="2873">
    <property type="gene designation" value="Igfbp2"/>
</dbReference>
<dbReference type="eggNOG" id="ENOG502QRWQ">
    <property type="taxonomic scope" value="Eukaryota"/>
</dbReference>
<dbReference type="GeneTree" id="ENSGT00940000158542"/>
<dbReference type="HOGENOM" id="CLU_070833_3_0_1"/>
<dbReference type="InParanoid" id="P12843"/>
<dbReference type="OMA" id="NLMPITM"/>
<dbReference type="OrthoDB" id="45746at9989"/>
<dbReference type="PhylomeDB" id="P12843"/>
<dbReference type="TreeFam" id="TF331211"/>
<dbReference type="Reactome" id="R-RNO-381426">
    <property type="pathway name" value="Regulation of Insulin-like Growth Factor (IGF) transport and uptake by Insulin-like Growth Factor Binding Proteins (IGFBPs)"/>
</dbReference>
<dbReference type="PRO" id="PR:P12843"/>
<dbReference type="Proteomes" id="UP000002494">
    <property type="component" value="Chromosome 9"/>
</dbReference>
<dbReference type="Bgee" id="ENSRNOG00000016957">
    <property type="expression patterns" value="Expressed in stomach and 19 other cell types or tissues"/>
</dbReference>
<dbReference type="GO" id="GO:0016324">
    <property type="term" value="C:apical plasma membrane"/>
    <property type="evidence" value="ECO:0000314"/>
    <property type="project" value="RGD"/>
</dbReference>
<dbReference type="GO" id="GO:0005576">
    <property type="term" value="C:extracellular region"/>
    <property type="evidence" value="ECO:0000314"/>
    <property type="project" value="UniProtKB"/>
</dbReference>
<dbReference type="GO" id="GO:0005615">
    <property type="term" value="C:extracellular space"/>
    <property type="evidence" value="ECO:0000314"/>
    <property type="project" value="RGD"/>
</dbReference>
<dbReference type="GO" id="GO:0005520">
    <property type="term" value="F:insulin-like growth factor binding"/>
    <property type="evidence" value="ECO:0000266"/>
    <property type="project" value="RGD"/>
</dbReference>
<dbReference type="GO" id="GO:0031994">
    <property type="term" value="F:insulin-like growth factor I binding"/>
    <property type="evidence" value="ECO:0000314"/>
    <property type="project" value="UniProtKB"/>
</dbReference>
<dbReference type="GO" id="GO:0031995">
    <property type="term" value="F:insulin-like growth factor II binding"/>
    <property type="evidence" value="ECO:0000314"/>
    <property type="project" value="RGD"/>
</dbReference>
<dbReference type="GO" id="GO:0004864">
    <property type="term" value="F:protein phosphatase inhibitor activity"/>
    <property type="evidence" value="ECO:0000266"/>
    <property type="project" value="RGD"/>
</dbReference>
<dbReference type="GO" id="GO:0141069">
    <property type="term" value="F:receptor ligand inhibitor activity"/>
    <property type="evidence" value="ECO:0000266"/>
    <property type="project" value="RGD"/>
</dbReference>
<dbReference type="GO" id="GO:0030547">
    <property type="term" value="F:signaling receptor inhibitor activity"/>
    <property type="evidence" value="ECO:0000266"/>
    <property type="project" value="RGD"/>
</dbReference>
<dbReference type="GO" id="GO:0032870">
    <property type="term" value="P:cellular response to hormone stimulus"/>
    <property type="evidence" value="ECO:0000270"/>
    <property type="project" value="RGD"/>
</dbReference>
<dbReference type="GO" id="GO:0007565">
    <property type="term" value="P:female pregnancy"/>
    <property type="evidence" value="ECO:0000270"/>
    <property type="project" value="RGD"/>
</dbReference>
<dbReference type="GO" id="GO:0001649">
    <property type="term" value="P:osteoblast differentiation"/>
    <property type="evidence" value="ECO:0000266"/>
    <property type="project" value="RGD"/>
</dbReference>
<dbReference type="GO" id="GO:0042104">
    <property type="term" value="P:positive regulation of activated T cell proliferation"/>
    <property type="evidence" value="ECO:0000250"/>
    <property type="project" value="UniProtKB"/>
</dbReference>
<dbReference type="GO" id="GO:0045927">
    <property type="term" value="P:positive regulation of growth"/>
    <property type="evidence" value="ECO:0000266"/>
    <property type="project" value="RGD"/>
</dbReference>
<dbReference type="GO" id="GO:0043567">
    <property type="term" value="P:regulation of insulin-like growth factor receptor signaling pathway"/>
    <property type="evidence" value="ECO:0000250"/>
    <property type="project" value="UniProtKB"/>
</dbReference>
<dbReference type="GO" id="GO:0032355">
    <property type="term" value="P:response to estradiol"/>
    <property type="evidence" value="ECO:0000270"/>
    <property type="project" value="RGD"/>
</dbReference>
<dbReference type="GO" id="GO:0043627">
    <property type="term" value="P:response to estrogen"/>
    <property type="evidence" value="ECO:0000270"/>
    <property type="project" value="RGD"/>
</dbReference>
<dbReference type="GO" id="GO:0051384">
    <property type="term" value="P:response to glucocorticoid"/>
    <property type="evidence" value="ECO:0000270"/>
    <property type="project" value="RGD"/>
</dbReference>
<dbReference type="GO" id="GO:0009612">
    <property type="term" value="P:response to mechanical stimulus"/>
    <property type="evidence" value="ECO:0000270"/>
    <property type="project" value="RGD"/>
</dbReference>
<dbReference type="GO" id="GO:0007584">
    <property type="term" value="P:response to nutrient"/>
    <property type="evidence" value="ECO:0000270"/>
    <property type="project" value="RGD"/>
</dbReference>
<dbReference type="GO" id="GO:0032526">
    <property type="term" value="P:response to retinoic acid"/>
    <property type="evidence" value="ECO:0000270"/>
    <property type="project" value="RGD"/>
</dbReference>
<dbReference type="GO" id="GO:0048545">
    <property type="term" value="P:response to steroid hormone"/>
    <property type="evidence" value="ECO:0000270"/>
    <property type="project" value="RGD"/>
</dbReference>
<dbReference type="GO" id="GO:0009410">
    <property type="term" value="P:response to xenobiotic stimulus"/>
    <property type="evidence" value="ECO:0000270"/>
    <property type="project" value="RGD"/>
</dbReference>
<dbReference type="CDD" id="cd00191">
    <property type="entry name" value="TY"/>
    <property type="match status" value="1"/>
</dbReference>
<dbReference type="FunFam" id="4.10.40.20:FF:000007">
    <property type="entry name" value="Insulin-like growth factor-binding protein 2"/>
    <property type="match status" value="1"/>
</dbReference>
<dbReference type="FunFam" id="4.10.800.10:FF:000002">
    <property type="entry name" value="Insulin-like growth factor-binding protein 2"/>
    <property type="match status" value="1"/>
</dbReference>
<dbReference type="Gene3D" id="4.10.40.20">
    <property type="match status" value="1"/>
</dbReference>
<dbReference type="Gene3D" id="4.10.800.10">
    <property type="entry name" value="Thyroglobulin type-1"/>
    <property type="match status" value="1"/>
</dbReference>
<dbReference type="InterPro" id="IPR009030">
    <property type="entry name" value="Growth_fac_rcpt_cys_sf"/>
</dbReference>
<dbReference type="InterPro" id="IPR012210">
    <property type="entry name" value="IGFBP-2"/>
</dbReference>
<dbReference type="InterPro" id="IPR000867">
    <property type="entry name" value="IGFBP-like"/>
</dbReference>
<dbReference type="InterPro" id="IPR022321">
    <property type="entry name" value="IGFBP_1-6_chordata"/>
</dbReference>
<dbReference type="InterPro" id="IPR017891">
    <property type="entry name" value="Insulin_GF-bd_Cys-rich_CS"/>
</dbReference>
<dbReference type="InterPro" id="IPR000716">
    <property type="entry name" value="Thyroglobulin_1"/>
</dbReference>
<dbReference type="InterPro" id="IPR036857">
    <property type="entry name" value="Thyroglobulin_1_sf"/>
</dbReference>
<dbReference type="PANTHER" id="PTHR11551">
    <property type="entry name" value="INSULIN-LIKE GROWTH FACTOR BINDING PROTEIN"/>
    <property type="match status" value="1"/>
</dbReference>
<dbReference type="PANTHER" id="PTHR11551:SF5">
    <property type="entry name" value="INSULIN-LIKE GROWTH FACTOR-BINDING PROTEIN 2"/>
    <property type="match status" value="1"/>
</dbReference>
<dbReference type="Pfam" id="PF00219">
    <property type="entry name" value="IGFBP"/>
    <property type="match status" value="1"/>
</dbReference>
<dbReference type="Pfam" id="PF00086">
    <property type="entry name" value="Thyroglobulin_1"/>
    <property type="match status" value="1"/>
</dbReference>
<dbReference type="PRINTS" id="PR01976">
    <property type="entry name" value="IGFBPFAMILY"/>
</dbReference>
<dbReference type="PRINTS" id="PR01978">
    <property type="entry name" value="IGFBPFAMILY2"/>
</dbReference>
<dbReference type="SMART" id="SM00121">
    <property type="entry name" value="IB"/>
    <property type="match status" value="1"/>
</dbReference>
<dbReference type="SMART" id="SM00211">
    <property type="entry name" value="TY"/>
    <property type="match status" value="1"/>
</dbReference>
<dbReference type="SUPFAM" id="SSF57184">
    <property type="entry name" value="Growth factor receptor domain"/>
    <property type="match status" value="1"/>
</dbReference>
<dbReference type="SUPFAM" id="SSF57610">
    <property type="entry name" value="Thyroglobulin type-1 domain"/>
    <property type="match status" value="1"/>
</dbReference>
<dbReference type="PROSITE" id="PS00222">
    <property type="entry name" value="IGFBP_N_1"/>
    <property type="match status" value="1"/>
</dbReference>
<dbReference type="PROSITE" id="PS51323">
    <property type="entry name" value="IGFBP_N_2"/>
    <property type="match status" value="1"/>
</dbReference>
<dbReference type="PROSITE" id="PS00484">
    <property type="entry name" value="THYROGLOBULIN_1_1"/>
    <property type="match status" value="1"/>
</dbReference>
<dbReference type="PROSITE" id="PS51162">
    <property type="entry name" value="THYROGLOBULIN_1_2"/>
    <property type="match status" value="1"/>
</dbReference>
<protein>
    <recommendedName>
        <fullName>Insulin-like growth factor-binding protein 2</fullName>
        <shortName>IBP-2</shortName>
        <shortName>IGF-binding protein 2</shortName>
        <shortName>IGFBP-2</shortName>
    </recommendedName>
    <alternativeName>
        <fullName>BRL-BP</fullName>
    </alternativeName>
</protein>
<feature type="signal peptide" evidence="6">
    <location>
        <begin position="1"/>
        <end position="34"/>
    </location>
</feature>
<feature type="chain" id="PRO_0000014373" description="Insulin-like growth factor-binding protein 2">
    <location>
        <begin position="35"/>
        <end position="304"/>
    </location>
</feature>
<feature type="domain" description="IGFBP N-terminal" evidence="3">
    <location>
        <begin position="36"/>
        <end position="118"/>
    </location>
</feature>
<feature type="domain" description="Thyroglobulin type-1" evidence="2">
    <location>
        <begin position="203"/>
        <end position="285"/>
    </location>
</feature>
<feature type="short sequence motif" description="Cell attachment site">
    <location>
        <begin position="280"/>
        <end position="282"/>
    </location>
</feature>
<feature type="disulfide bond" evidence="3">
    <location>
        <begin position="40"/>
        <end position="68"/>
    </location>
</feature>
<feature type="disulfide bond" evidence="3">
    <location>
        <begin position="43"/>
        <end position="70"/>
    </location>
</feature>
<feature type="disulfide bond" evidence="3">
    <location>
        <begin position="51"/>
        <end position="71"/>
    </location>
</feature>
<feature type="disulfide bond" evidence="3">
    <location>
        <begin position="59"/>
        <end position="74"/>
    </location>
</feature>
<feature type="disulfide bond" evidence="3">
    <location>
        <begin position="82"/>
        <end position="95"/>
    </location>
</feature>
<feature type="disulfide bond" evidence="3">
    <location>
        <begin position="89"/>
        <end position="115"/>
    </location>
</feature>
<feature type="disulfide bond" evidence="2">
    <location>
        <begin position="206"/>
        <end position="240"/>
    </location>
</feature>
<feature type="disulfide bond" evidence="2">
    <location>
        <begin position="251"/>
        <end position="262"/>
    </location>
</feature>
<feature type="disulfide bond" evidence="2">
    <location>
        <begin position="264"/>
        <end position="285"/>
    </location>
</feature>
<feature type="sequence conflict" description="In Ref. 1; AAA40829." evidence="9" ref="1">
    <original>A</original>
    <variation>V</variation>
    <location>
        <position position="298"/>
    </location>
</feature>
<proteinExistence type="evidence at protein level"/>
<accession>P12843</accession>
<accession>Q569C7</accession>
<comment type="function">
    <text evidence="1">Multifunctional protein that plays a critical role in regulating the availability of IGFs such as IGF1 and IGF2 to their receptors and thereby regulates IGF-mediated cellular processes including proliferation, differentiation, and apoptosis in a cell-type specific manner. Functions coordinately with receptor protein tyrosine phosphatase beta/PTPRB and the IGF1 receptor to regulate IGF1-mediated signaling by stimulating the phosphorylation of PTEN leading to its inactivation and AKT1 activation. Plays a positive role in cell migration via interaction with integrin alpha5/ITGA5 through an RGD motif. Additionally, interaction with ITGA5/ITGB1 enhances the adhesion of endothelial progenitor cells to endothelial cells. Upon mitochondrial damage, facilitates apoptosis with ITGA5 of podocytes, and then activates the phosphorylation of focal adhesion kinase (FAK)-mediated mitochondrial injury.</text>
</comment>
<comment type="subunit">
    <text evidence="1">Interacts with IGF1. Interacts with IGF2. Interacts (via RGD motif) with integrin alpha5/ITGA5; this interaction induces cell migration, adhesion or apoptosis according to the context. Interacts with PTPRB; this interaction leads to PTPRB dimerization and inactivation.</text>
</comment>
<comment type="subcellular location">
    <subcellularLocation>
        <location evidence="4 6 7">Secreted</location>
    </subcellularLocation>
</comment>
<comment type="tissue specificity">
    <text evidence="5">In adults, expressed in brain, testes, ovaries, and kidney. Expression in the adult liver is barely detectable.</text>
</comment>
<comment type="developmental stage">
    <text evidence="5 7">Predominantly expressed at fetal stages with highest expression in fetal liver. Also expressed in fetal kidney, intestine and lung, as well as muscle, heart and stomach.</text>
</comment>
<comment type="domain">
    <text evidence="8">The C-terminus is required for IGF-binding and growth inhibition.</text>
</comment>
<comment type="PTM">
    <text evidence="1">Cleaved by MMP9 leading to release of free IGF2 from IGFBP2-IGF2 complex, which contributes to enhance the motility and the growth of astrocytes.</text>
</comment>
<comment type="PTM">
    <text evidence="1">O-glycosylated.</text>
</comment>
<keyword id="KW-0217">Developmental protein</keyword>
<keyword id="KW-0903">Direct protein sequencing</keyword>
<keyword id="KW-1015">Disulfide bond</keyword>
<keyword id="KW-0325">Glycoprotein</keyword>
<keyword id="KW-0340">Growth factor binding</keyword>
<keyword id="KW-0341">Growth regulation</keyword>
<keyword id="KW-1185">Reference proteome</keyword>
<keyword id="KW-0964">Secreted</keyword>
<keyword id="KW-0732">Signal</keyword>
<organism>
    <name type="scientific">Rattus norvegicus</name>
    <name type="common">Rat</name>
    <dbReference type="NCBI Taxonomy" id="10116"/>
    <lineage>
        <taxon>Eukaryota</taxon>
        <taxon>Metazoa</taxon>
        <taxon>Chordata</taxon>
        <taxon>Craniata</taxon>
        <taxon>Vertebrata</taxon>
        <taxon>Euteleostomi</taxon>
        <taxon>Mammalia</taxon>
        <taxon>Eutheria</taxon>
        <taxon>Euarchontoglires</taxon>
        <taxon>Glires</taxon>
        <taxon>Rodentia</taxon>
        <taxon>Myomorpha</taxon>
        <taxon>Muroidea</taxon>
        <taxon>Muridae</taxon>
        <taxon>Murinae</taxon>
        <taxon>Rattus</taxon>
    </lineage>
</organism>
<evidence type="ECO:0000250" key="1">
    <source>
        <dbReference type="UniProtKB" id="P18065"/>
    </source>
</evidence>
<evidence type="ECO:0000255" key="2">
    <source>
        <dbReference type="PROSITE-ProRule" id="PRU00500"/>
    </source>
</evidence>
<evidence type="ECO:0000255" key="3">
    <source>
        <dbReference type="PROSITE-ProRule" id="PRU00653"/>
    </source>
</evidence>
<evidence type="ECO:0000269" key="4">
    <source>
    </source>
</evidence>
<evidence type="ECO:0000269" key="5">
    <source>
    </source>
</evidence>
<evidence type="ECO:0000269" key="6">
    <source>
    </source>
</evidence>
<evidence type="ECO:0000269" key="7">
    <source>
    </source>
</evidence>
<evidence type="ECO:0000269" key="8">
    <source>
    </source>
</evidence>
<evidence type="ECO:0000305" key="9"/>
<reference key="1">
    <citation type="journal article" date="1989" name="J. Biol. Chem.">
        <title>Nucleotide sequence and expression of a cDNA clone encoding a fetal rat binding protein for insulin-like growth factors.</title>
        <authorList>
            <person name="Brown A.L."/>
            <person name="Chiariotti L."/>
            <person name="Orlowski C.C."/>
            <person name="Mehlman T."/>
            <person name="Burgers W.H."/>
            <person name="Ackerman E.J."/>
            <person name="Bruni C.B."/>
            <person name="Rechler M.M."/>
        </authorList>
    </citation>
    <scope>NUCLEOTIDE SEQUENCE [MRNA]</scope>
    <scope>PARTIAL PROTEIN SEQUENCE</scope>
    <scope>INTERACTION WITH IGF1 AND IGF2</scope>
    <scope>SUBCELLULAR LOCATION</scope>
    <scope>DEVELOPMENTAL STAGE</scope>
</reference>
<reference key="2">
    <citation type="journal article" date="1989" name="Mol. Endocrinol.">
        <title>A low molecular weight insulin-like growth factor binding protein from rat: cDNA cloning and tissue distribution of its messenger RNA.</title>
        <authorList>
            <person name="Margot J.B."/>
            <person name="Binkert C."/>
            <person name="Mary J.-L."/>
            <person name="Landwehr J."/>
            <person name="Heinrich G."/>
            <person name="Schwander J."/>
        </authorList>
    </citation>
    <scope>NUCLEOTIDE SEQUENCE [MRNA]</scope>
    <scope>TISSUE SPECIFICITY</scope>
    <scope>DEVELOPMENTAL STAGE</scope>
    <source>
        <tissue>Liver</tissue>
    </source>
</reference>
<reference key="3">
    <citation type="journal article" date="2004" name="Genome Res.">
        <title>The status, quality, and expansion of the NIH full-length cDNA project: the Mammalian Gene Collection (MGC).</title>
        <authorList>
            <consortium name="The MGC Project Team"/>
        </authorList>
    </citation>
    <scope>NUCLEOTIDE SEQUENCE [LARGE SCALE MRNA]</scope>
    <source>
        <tissue>Ovary</tissue>
    </source>
</reference>
<reference key="4">
    <citation type="journal article" date="1989" name="Biochem. Biophys. Res. Commun.">
        <title>Identification of a novel binding protein for insulin-like growth factors in adult rat serum.</title>
        <authorList>
            <person name="Shimonaka M."/>
            <person name="Schroeder R."/>
            <person name="Shimasaki S."/>
            <person name="Ling N."/>
        </authorList>
    </citation>
    <scope>PROTEIN SEQUENCE OF 35-64</scope>
    <scope>SUBCELLULAR LOCATION</scope>
    <source>
        <tissue>Serum</tissue>
    </source>
</reference>
<reference key="5">
    <citation type="journal article" date="1986" name="J. Biol. Chem.">
        <title>Purification and amino-terminal sequence of an insulin-like growth factor-binding protein secreted by rat liver BRL-3A cells.</title>
        <authorList>
            <person name="Mottola C."/>
            <person name="Macdonald R.G."/>
            <person name="Brackett J.L."/>
            <person name="Mole J.E."/>
            <person name="Anderson J.K."/>
            <person name="Czech M.P."/>
        </authorList>
    </citation>
    <scope>PROTEIN SEQUENCE OF 38-68</scope>
    <scope>SUBCELLULAR LOCATION</scope>
</reference>
<reference key="6">
    <citation type="journal article" date="1988" name="Biochem. Biophys. Res. Commun.">
        <title>Isolation of a biologically active fragment from the carboxy terminus of the fetal rat binding protein for insulin-like growth factors.</title>
        <authorList>
            <person name="Wang J.F."/>
            <person name="Hampton B."/>
            <person name="Mehlman T."/>
            <person name="Burgess W.H."/>
            <person name="Rechler M.M."/>
        </authorList>
    </citation>
    <scope>PROTEIN SEQUENCE OF 178-204</scope>
    <scope>INTERACTION WITH IGF2</scope>
    <scope>DOMAIN</scope>
</reference>
<sequence>MLPRLGGPALPLLLPSLLLLLLLGAGGCGPGVRAEVLFRCPPCTPERLAACGPPPDAPCAELVREPGCGCCSVCARQEGEACGVYIPRCAQTLRCYPNPGSELPLKALVTGAGTCEKRRVGATPQQVADSEDDHSEGGLVENHVDGTMNMLGGSSAGRKPPKSGMKELAVFREKVNEQHRQMGKGAKHLSLEEPKKLRPPPARTPCQQELDQVLERISTMRLPDDRGPLEHLYSLHIPNCDKHGLYNLKQCKMSLNGQRGECWCVNPNTGKPIQGAPTIRGDPECHLFYNEQQENDGAHAQRVQ</sequence>
<gene>
    <name type="primary">Igfbp2</name>
    <name type="synonym">Igfbp-2</name>
</gene>